<keyword id="KW-1003">Cell membrane</keyword>
<keyword id="KW-0255">Endonuclease</keyword>
<keyword id="KW-0378">Hydrolase</keyword>
<keyword id="KW-0472">Membrane</keyword>
<keyword id="KW-0540">Nuclease</keyword>
<keyword id="KW-1185">Reference proteome</keyword>
<keyword id="KW-0694">RNA-binding</keyword>
<keyword id="KW-0812">Transmembrane</keyword>
<keyword id="KW-1133">Transmembrane helix</keyword>
<evidence type="ECO:0000255" key="1">
    <source>
        <dbReference type="HAMAP-Rule" id="MF_00335"/>
    </source>
</evidence>
<evidence type="ECO:0000255" key="2">
    <source>
        <dbReference type="PROSITE-ProRule" id="PRU01175"/>
    </source>
</evidence>
<organism>
    <name type="scientific">Thermoanaerobacter pseudethanolicus (strain ATCC 33223 / 39E)</name>
    <name type="common">Clostridium thermohydrosulfuricum</name>
    <dbReference type="NCBI Taxonomy" id="340099"/>
    <lineage>
        <taxon>Bacteria</taxon>
        <taxon>Bacillati</taxon>
        <taxon>Bacillota</taxon>
        <taxon>Clostridia</taxon>
        <taxon>Thermoanaerobacterales</taxon>
        <taxon>Thermoanaerobacteraceae</taxon>
        <taxon>Thermoanaerobacter</taxon>
    </lineage>
</organism>
<reference key="1">
    <citation type="submission" date="2008-01" db="EMBL/GenBank/DDBJ databases">
        <title>Complete sequence of Thermoanaerobacter pseudethanolicus 39E.</title>
        <authorList>
            <person name="Copeland A."/>
            <person name="Lucas S."/>
            <person name="Lapidus A."/>
            <person name="Barry K."/>
            <person name="Glavina del Rio T."/>
            <person name="Dalin E."/>
            <person name="Tice H."/>
            <person name="Pitluck S."/>
            <person name="Bruce D."/>
            <person name="Goodwin L."/>
            <person name="Saunders E."/>
            <person name="Brettin T."/>
            <person name="Detter J.C."/>
            <person name="Han C."/>
            <person name="Schmutz J."/>
            <person name="Larimer F."/>
            <person name="Land M."/>
            <person name="Hauser L."/>
            <person name="Kyrpides N."/>
            <person name="Lykidis A."/>
            <person name="Hemme C."/>
            <person name="Fields M.W."/>
            <person name="He Z."/>
            <person name="Zhou J."/>
            <person name="Richardson P."/>
        </authorList>
    </citation>
    <scope>NUCLEOTIDE SEQUENCE [LARGE SCALE GENOMIC DNA]</scope>
    <source>
        <strain>ATCC 33223 / DSM 2355 / 39E</strain>
    </source>
</reference>
<dbReference type="EC" id="3.1.-.-" evidence="1"/>
<dbReference type="EMBL" id="CP000924">
    <property type="protein sequence ID" value="ABY94842.1"/>
    <property type="molecule type" value="Genomic_DNA"/>
</dbReference>
<dbReference type="RefSeq" id="WP_012269349.1">
    <property type="nucleotide sequence ID" value="NC_010321.1"/>
</dbReference>
<dbReference type="SMR" id="B0K9M9"/>
<dbReference type="STRING" id="340099.Teth39_1188"/>
<dbReference type="KEGG" id="tpd:Teth39_1188"/>
<dbReference type="eggNOG" id="COG1418">
    <property type="taxonomic scope" value="Bacteria"/>
</dbReference>
<dbReference type="HOGENOM" id="CLU_028328_1_0_9"/>
<dbReference type="Proteomes" id="UP000002156">
    <property type="component" value="Chromosome"/>
</dbReference>
<dbReference type="GO" id="GO:0005886">
    <property type="term" value="C:plasma membrane"/>
    <property type="evidence" value="ECO:0007669"/>
    <property type="project" value="UniProtKB-SubCell"/>
</dbReference>
<dbReference type="GO" id="GO:0003723">
    <property type="term" value="F:RNA binding"/>
    <property type="evidence" value="ECO:0007669"/>
    <property type="project" value="UniProtKB-UniRule"/>
</dbReference>
<dbReference type="GO" id="GO:0004521">
    <property type="term" value="F:RNA endonuclease activity"/>
    <property type="evidence" value="ECO:0007669"/>
    <property type="project" value="UniProtKB-UniRule"/>
</dbReference>
<dbReference type="GO" id="GO:0006402">
    <property type="term" value="P:mRNA catabolic process"/>
    <property type="evidence" value="ECO:0007669"/>
    <property type="project" value="UniProtKB-UniRule"/>
</dbReference>
<dbReference type="CDD" id="cd00077">
    <property type="entry name" value="HDc"/>
    <property type="match status" value="1"/>
</dbReference>
<dbReference type="CDD" id="cd22431">
    <property type="entry name" value="KH-I_RNaseY"/>
    <property type="match status" value="1"/>
</dbReference>
<dbReference type="FunFam" id="1.10.3210.10:FF:000022">
    <property type="entry name" value="Ribonuclease Y"/>
    <property type="match status" value="1"/>
</dbReference>
<dbReference type="FunFam" id="3.30.1370.10:FF:000006">
    <property type="entry name" value="Ribonuclease Y"/>
    <property type="match status" value="1"/>
</dbReference>
<dbReference type="Gene3D" id="1.10.3210.10">
    <property type="entry name" value="Hypothetical protein af1432"/>
    <property type="match status" value="1"/>
</dbReference>
<dbReference type="Gene3D" id="3.30.1370.10">
    <property type="entry name" value="K Homology domain, type 1"/>
    <property type="match status" value="1"/>
</dbReference>
<dbReference type="HAMAP" id="MF_00335">
    <property type="entry name" value="RNase_Y"/>
    <property type="match status" value="1"/>
</dbReference>
<dbReference type="InterPro" id="IPR003607">
    <property type="entry name" value="HD/PDEase_dom"/>
</dbReference>
<dbReference type="InterPro" id="IPR006674">
    <property type="entry name" value="HD_domain"/>
</dbReference>
<dbReference type="InterPro" id="IPR006675">
    <property type="entry name" value="HDIG_dom"/>
</dbReference>
<dbReference type="InterPro" id="IPR004087">
    <property type="entry name" value="KH_dom"/>
</dbReference>
<dbReference type="InterPro" id="IPR004088">
    <property type="entry name" value="KH_dom_type_1"/>
</dbReference>
<dbReference type="InterPro" id="IPR036612">
    <property type="entry name" value="KH_dom_type_1_sf"/>
</dbReference>
<dbReference type="InterPro" id="IPR017705">
    <property type="entry name" value="Ribonuclease_Y"/>
</dbReference>
<dbReference type="InterPro" id="IPR022711">
    <property type="entry name" value="RNase_Y_N"/>
</dbReference>
<dbReference type="NCBIfam" id="TIGR00277">
    <property type="entry name" value="HDIG"/>
    <property type="match status" value="1"/>
</dbReference>
<dbReference type="NCBIfam" id="TIGR03319">
    <property type="entry name" value="RNase_Y"/>
    <property type="match status" value="1"/>
</dbReference>
<dbReference type="PANTHER" id="PTHR12826">
    <property type="entry name" value="RIBONUCLEASE Y"/>
    <property type="match status" value="1"/>
</dbReference>
<dbReference type="PANTHER" id="PTHR12826:SF15">
    <property type="entry name" value="RIBONUCLEASE Y"/>
    <property type="match status" value="1"/>
</dbReference>
<dbReference type="Pfam" id="PF01966">
    <property type="entry name" value="HD"/>
    <property type="match status" value="1"/>
</dbReference>
<dbReference type="Pfam" id="PF00013">
    <property type="entry name" value="KH_1"/>
    <property type="match status" value="1"/>
</dbReference>
<dbReference type="Pfam" id="PF12072">
    <property type="entry name" value="RNase_Y_N"/>
    <property type="match status" value="1"/>
</dbReference>
<dbReference type="SMART" id="SM00471">
    <property type="entry name" value="HDc"/>
    <property type="match status" value="1"/>
</dbReference>
<dbReference type="SMART" id="SM00322">
    <property type="entry name" value="KH"/>
    <property type="match status" value="1"/>
</dbReference>
<dbReference type="SUPFAM" id="SSF54791">
    <property type="entry name" value="Eukaryotic type KH-domain (KH-domain type I)"/>
    <property type="match status" value="1"/>
</dbReference>
<dbReference type="SUPFAM" id="SSF109604">
    <property type="entry name" value="HD-domain/PDEase-like"/>
    <property type="match status" value="1"/>
</dbReference>
<dbReference type="PROSITE" id="PS51831">
    <property type="entry name" value="HD"/>
    <property type="match status" value="1"/>
</dbReference>
<dbReference type="PROSITE" id="PS50084">
    <property type="entry name" value="KH_TYPE_1"/>
    <property type="match status" value="1"/>
</dbReference>
<sequence length="508" mass="57293">MIITALIAIAVGFLIGYLARKIIAESKIKSAENLARTILESAKRDAENKKRELLLEAKEEIHRMRTDLEKEIRDRRGELQRLEKRLLQKEETLDKRAETLEQKESFLEEKQKEIQQLEEQISLLYQKEIEELERISGLSREEAKAILLENVQKDIQHEMAVMIKEMENKAKEEAEMKAREIIGNAIQRCAADHAAETTVSVVTLPNDEMKGRIIGREGRNIRTIETLTGIDLIIDDTPEAVVISGFDPIRREVARIALEKLIEDGRIHPARIEEMVEKAKKEVDNMILKAGEEAAFEVGIHGLHPELIKLLGRLKFRTSYGQNVLKHSIEVAHLAGLMAYELGADALVAKRAGLLHDIGKAVDHEVEGPHVMIGAELAKRYHESDAVIHAIMAHHNDVEPQTVEAVLVQAADAISAARPGARREALEAYIKRLDKLEQIANSFEGVEKSYAIQAGREIRIMVKPEIVDDDDIVILARNISKKIEEEVEYPGQIKVTVIRETVAVDYAK</sequence>
<gene>
    <name evidence="1" type="primary">rny</name>
    <name type="ordered locus">Teth39_1188</name>
</gene>
<comment type="function">
    <text evidence="1">Endoribonuclease that initiates mRNA decay.</text>
</comment>
<comment type="subcellular location">
    <subcellularLocation>
        <location evidence="1">Cell membrane</location>
        <topology evidence="1">Single-pass membrane protein</topology>
    </subcellularLocation>
</comment>
<comment type="similarity">
    <text evidence="1">Belongs to the RNase Y family.</text>
</comment>
<accession>B0K9M9</accession>
<proteinExistence type="inferred from homology"/>
<feature type="chain" id="PRO_0000344961" description="Ribonuclease Y">
    <location>
        <begin position="1"/>
        <end position="508"/>
    </location>
</feature>
<feature type="transmembrane region" description="Helical" evidence="1">
    <location>
        <begin position="2"/>
        <end position="22"/>
    </location>
</feature>
<feature type="domain" description="KH" evidence="1">
    <location>
        <begin position="198"/>
        <end position="261"/>
    </location>
</feature>
<feature type="domain" description="HD" evidence="2">
    <location>
        <begin position="324"/>
        <end position="417"/>
    </location>
</feature>
<name>RNY_THEP3</name>
<protein>
    <recommendedName>
        <fullName evidence="1">Ribonuclease Y</fullName>
        <shortName evidence="1">RNase Y</shortName>
        <ecNumber evidence="1">3.1.-.-</ecNumber>
    </recommendedName>
</protein>